<name>LPRN_MYCTU</name>
<accession>I6Y3P1</accession>
<reference key="1">
    <citation type="journal article" date="1998" name="Nature">
        <title>Deciphering the biology of Mycobacterium tuberculosis from the complete genome sequence.</title>
        <authorList>
            <person name="Cole S.T."/>
            <person name="Brosch R."/>
            <person name="Parkhill J."/>
            <person name="Garnier T."/>
            <person name="Churcher C.M."/>
            <person name="Harris D.E."/>
            <person name="Gordon S.V."/>
            <person name="Eiglmeier K."/>
            <person name="Gas S."/>
            <person name="Barry C.E. III"/>
            <person name="Tekaia F."/>
            <person name="Badcock K."/>
            <person name="Basham D."/>
            <person name="Brown D."/>
            <person name="Chillingworth T."/>
            <person name="Connor R."/>
            <person name="Davies R.M."/>
            <person name="Devlin K."/>
            <person name="Feltwell T."/>
            <person name="Gentles S."/>
            <person name="Hamlin N."/>
            <person name="Holroyd S."/>
            <person name="Hornsby T."/>
            <person name="Jagels K."/>
            <person name="Krogh A."/>
            <person name="McLean J."/>
            <person name="Moule S."/>
            <person name="Murphy L.D."/>
            <person name="Oliver S."/>
            <person name="Osborne J."/>
            <person name="Quail M.A."/>
            <person name="Rajandream M.A."/>
            <person name="Rogers J."/>
            <person name="Rutter S."/>
            <person name="Seeger K."/>
            <person name="Skelton S."/>
            <person name="Squares S."/>
            <person name="Squares R."/>
            <person name="Sulston J.E."/>
            <person name="Taylor K."/>
            <person name="Whitehead S."/>
            <person name="Barrell B.G."/>
        </authorList>
    </citation>
    <scope>NUCLEOTIDE SEQUENCE [LARGE SCALE GENOMIC DNA]</scope>
    <source>
        <strain>ATCC 25618 / H37Rv</strain>
    </source>
</reference>
<reference key="2">
    <citation type="journal article" date="2011" name="Mol. Cell. Proteomics">
        <title>Proteogenomic analysis of Mycobacterium tuberculosis by high resolution mass spectrometry.</title>
        <authorList>
            <person name="Kelkar D.S."/>
            <person name="Kumar D."/>
            <person name="Kumar P."/>
            <person name="Balakrishnan L."/>
            <person name="Muthusamy B."/>
            <person name="Yadav A.K."/>
            <person name="Shrivastava P."/>
            <person name="Marimuthu A."/>
            <person name="Anand S."/>
            <person name="Sundaram H."/>
            <person name="Kingsbury R."/>
            <person name="Harsha H.C."/>
            <person name="Nair B."/>
            <person name="Prasad T.S."/>
            <person name="Chauhan D.S."/>
            <person name="Katoch K."/>
            <person name="Katoch V.M."/>
            <person name="Kumar P."/>
            <person name="Chaerkady R."/>
            <person name="Ramachandran S."/>
            <person name="Dash D."/>
            <person name="Pandey A."/>
        </authorList>
    </citation>
    <scope>IDENTIFICATION BY MASS SPECTROMETRY [LARGE SCALE ANALYSIS]</scope>
    <source>
        <strain>ATCC 25618 / H37Rv</strain>
    </source>
</reference>
<reference key="3">
    <citation type="journal article" date="2014" name="Pathog. Dis.">
        <title>The Mycobacterium tuberculosis recombinant LprN protein of mce4 operon induces Th-1 type response deleterious to protection in mice.</title>
        <authorList>
            <person name="Pasricha R."/>
            <person name="Saini N.K."/>
            <person name="Rathor N."/>
            <person name="Pathak R."/>
            <person name="Sinha R."/>
            <person name="Varma-Basil M."/>
            <person name="Mishra K."/>
            <person name="Brahmachari V."/>
            <person name="Bose M."/>
        </authorList>
    </citation>
    <scope>FUNCTION</scope>
    <scope>PALMITOYLATION AT CYS-21</scope>
    <source>
        <strain>H37Rv</strain>
    </source>
</reference>
<evidence type="ECO:0000255" key="1">
    <source>
        <dbReference type="PROSITE-ProRule" id="PRU00303"/>
    </source>
</evidence>
<evidence type="ECO:0000269" key="2">
    <source>
    </source>
</evidence>
<evidence type="ECO:0000303" key="3">
    <source>
    </source>
</evidence>
<evidence type="ECO:0000305" key="4">
    <source>
    </source>
</evidence>
<evidence type="ECO:0000312" key="5">
    <source>
        <dbReference type="EMBL" id="CCP46317.1"/>
    </source>
</evidence>
<dbReference type="EMBL" id="AL123456">
    <property type="protein sequence ID" value="CCP46317.1"/>
    <property type="molecule type" value="Genomic_DNA"/>
</dbReference>
<dbReference type="RefSeq" id="NP_218012.1">
    <property type="nucleotide sequence ID" value="NC_000962.3"/>
</dbReference>
<dbReference type="RefSeq" id="WP_003418964.1">
    <property type="nucleotide sequence ID" value="NZ_NVQJ01000042.1"/>
</dbReference>
<dbReference type="SMR" id="I6Y3P1"/>
<dbReference type="FunCoup" id="I6Y3P1">
    <property type="interactions" value="83"/>
</dbReference>
<dbReference type="STRING" id="83332.Rv3495c"/>
<dbReference type="PaxDb" id="83332-Rv3495c"/>
<dbReference type="DNASU" id="888364"/>
<dbReference type="GeneID" id="888364"/>
<dbReference type="KEGG" id="mtu:Rv3495c"/>
<dbReference type="KEGG" id="mtv:RVBD_3495c"/>
<dbReference type="PATRIC" id="fig|83332.111.peg.3893"/>
<dbReference type="TubercuList" id="Rv3495c"/>
<dbReference type="eggNOG" id="COG1463">
    <property type="taxonomic scope" value="Bacteria"/>
</dbReference>
<dbReference type="HOGENOM" id="CLU_045966_1_1_11"/>
<dbReference type="InParanoid" id="I6Y3P1"/>
<dbReference type="OrthoDB" id="9774928at2"/>
<dbReference type="PhylomeDB" id="I6Y3P1"/>
<dbReference type="Proteomes" id="UP000001584">
    <property type="component" value="Chromosome"/>
</dbReference>
<dbReference type="GO" id="GO:0009274">
    <property type="term" value="C:peptidoglycan-based cell wall"/>
    <property type="evidence" value="ECO:0000318"/>
    <property type="project" value="GO_Central"/>
</dbReference>
<dbReference type="GO" id="GO:0005886">
    <property type="term" value="C:plasma membrane"/>
    <property type="evidence" value="ECO:0000318"/>
    <property type="project" value="GO_Central"/>
</dbReference>
<dbReference type="GO" id="GO:0120014">
    <property type="term" value="F:phospholipid transfer activity"/>
    <property type="evidence" value="ECO:0000318"/>
    <property type="project" value="GO_Central"/>
</dbReference>
<dbReference type="GO" id="GO:0120010">
    <property type="term" value="P:intermembrane phospholipid transfer"/>
    <property type="evidence" value="ECO:0000318"/>
    <property type="project" value="GO_Central"/>
</dbReference>
<dbReference type="GO" id="GO:0044409">
    <property type="term" value="P:symbiont entry into host"/>
    <property type="evidence" value="ECO:0000318"/>
    <property type="project" value="GO_Central"/>
</dbReference>
<dbReference type="InterPro" id="IPR005693">
    <property type="entry name" value="Mce"/>
</dbReference>
<dbReference type="InterPro" id="IPR003399">
    <property type="entry name" value="Mce/MlaD"/>
</dbReference>
<dbReference type="InterPro" id="IPR052336">
    <property type="entry name" value="MlaD_Phospholipid_Transporter"/>
</dbReference>
<dbReference type="NCBIfam" id="TIGR00996">
    <property type="entry name" value="Mtu_fam_mce"/>
    <property type="match status" value="1"/>
</dbReference>
<dbReference type="PANTHER" id="PTHR33371">
    <property type="entry name" value="INTERMEMBRANE PHOSPHOLIPID TRANSPORT SYSTEM BINDING PROTEIN MLAD-RELATED"/>
    <property type="match status" value="1"/>
</dbReference>
<dbReference type="PANTHER" id="PTHR33371:SF15">
    <property type="entry name" value="LIPOPROTEIN LPRN"/>
    <property type="match status" value="1"/>
</dbReference>
<dbReference type="Pfam" id="PF02470">
    <property type="entry name" value="MlaD"/>
    <property type="match status" value="1"/>
</dbReference>
<dbReference type="PROSITE" id="PS51257">
    <property type="entry name" value="PROKAR_LIPOPROTEIN"/>
    <property type="match status" value="1"/>
</dbReference>
<protein>
    <recommendedName>
        <fullName evidence="3">Lipoprotein LprN</fullName>
    </recommendedName>
</protein>
<gene>
    <name type="primary">lprN</name>
    <name evidence="5" type="synonym">mce4E</name>
    <name type="ordered locus">Rv3495c</name>
</gene>
<keyword id="KW-1003">Cell membrane</keyword>
<keyword id="KW-0449">Lipoprotein</keyword>
<keyword id="KW-0472">Membrane</keyword>
<keyword id="KW-0564">Palmitate</keyword>
<keyword id="KW-1185">Reference proteome</keyword>
<keyword id="KW-0732">Signal</keyword>
<keyword id="KW-0843">Virulence</keyword>
<feature type="signal peptide" evidence="1">
    <location>
        <begin position="1"/>
        <end position="20"/>
    </location>
</feature>
<feature type="chain" id="PRO_0000438419" description="Lipoprotein LprN" evidence="1">
    <location>
        <begin position="21"/>
        <end position="384"/>
    </location>
</feature>
<feature type="lipid moiety-binding region" description="N-palmitoyl cysteine" evidence="1 4">
    <location>
        <position position="21"/>
    </location>
</feature>
<feature type="lipid moiety-binding region" description="S-diacylglycerol cysteine" evidence="1">
    <location>
        <position position="21"/>
    </location>
</feature>
<sequence>MNRIWLRAIILTASSALLAGCQFGGLNSLPLPGTAGHGEGAYSVTVEMADVATLPQNSPVMVDDVTVGSVAGIVAVQRPDGSFYAAVKLDLDKNVLLPANAVAKVSQTSLLGSLHVELAPPTDRPPTGRLVDGSRITEANTDRFPTTEEVFSALGVVVNKGNVGALEEIIDETHQAVAGRQAQFVNLVPRLAELTAGLNRQVHDIIDALDGLNRVSAILARDKDNLGRALDTLPDAVRVLNQNRDHIVDAFAALKRLTMVTSHVLAETKVDFGEDLKDLYSIVKALNDDRKDFVTSLQLLLTFPFPNFGIKQAVRGDYLNVFTTFDLTLRRIGETFFTTAYFDPNMAHMDEILNPPDFLIGELANLSGQAADPFKIPPGTASGQ</sequence>
<comment type="function">
    <text evidence="2">Stimulates the host (mouse) immune response; lipidated protein produced in E.coli stimulates T-cell proliferation in mice previously sensitized with LprN. Spleenocytes from these mice produce increased amounts of TNF-alpha and IFN-gamma, as well as somewhat increased nitric oxide levels, upon subsequent challenge with LprN. Previously sensitized mice infected with M.tuberculosis have an exacerbated disease response, suggesting this lipoprotein may down-regulate the host's immune response.</text>
</comment>
<comment type="subcellular location">
    <subcellularLocation>
        <location evidence="1">Cell membrane</location>
        <topology evidence="1">Lipid-anchor</topology>
    </subcellularLocation>
</comment>
<comment type="PTM">
    <text evidence="2">Lipidated upon expression in E.coli.</text>
</comment>
<proteinExistence type="evidence at protein level"/>
<organism>
    <name type="scientific">Mycobacterium tuberculosis (strain ATCC 25618 / H37Rv)</name>
    <dbReference type="NCBI Taxonomy" id="83332"/>
    <lineage>
        <taxon>Bacteria</taxon>
        <taxon>Bacillati</taxon>
        <taxon>Actinomycetota</taxon>
        <taxon>Actinomycetes</taxon>
        <taxon>Mycobacteriales</taxon>
        <taxon>Mycobacteriaceae</taxon>
        <taxon>Mycobacterium</taxon>
        <taxon>Mycobacterium tuberculosis complex</taxon>
    </lineage>
</organism>